<feature type="chain" id="PRO_0000046935" description="Zinc finger protein basonuclin-2">
    <location>
        <begin position="1"/>
        <end position="1127"/>
    </location>
</feature>
<feature type="zinc finger region" description="C2H2-type 1" evidence="2">
    <location>
        <begin position="469"/>
        <end position="492"/>
    </location>
</feature>
<feature type="zinc finger region" description="C2H2-type 2" evidence="2">
    <location>
        <begin position="861"/>
        <end position="884"/>
    </location>
</feature>
<feature type="zinc finger region" description="C2H2-type 3" evidence="2">
    <location>
        <begin position="1063"/>
        <end position="1086"/>
    </location>
</feature>
<feature type="zinc finger region" description="C2H2-type 4" evidence="2">
    <location>
        <begin position="1091"/>
        <end position="1118"/>
    </location>
</feature>
<feature type="region of interest" description="Disordered" evidence="3">
    <location>
        <begin position="44"/>
        <end position="67"/>
    </location>
</feature>
<feature type="region of interest" description="Disordered" evidence="3">
    <location>
        <begin position="386"/>
        <end position="450"/>
    </location>
</feature>
<feature type="region of interest" description="Disordered" evidence="3">
    <location>
        <begin position="675"/>
        <end position="772"/>
    </location>
</feature>
<feature type="region of interest" description="Disordered" evidence="3">
    <location>
        <begin position="955"/>
        <end position="976"/>
    </location>
</feature>
<feature type="region of interest" description="Disordered" evidence="3">
    <location>
        <begin position="996"/>
        <end position="1041"/>
    </location>
</feature>
<feature type="region of interest" description="Disordered" evidence="3">
    <location>
        <begin position="1107"/>
        <end position="1127"/>
    </location>
</feature>
<feature type="compositionally biased region" description="Basic and acidic residues" evidence="3">
    <location>
        <begin position="49"/>
        <end position="67"/>
    </location>
</feature>
<feature type="compositionally biased region" description="Low complexity" evidence="3">
    <location>
        <begin position="389"/>
        <end position="400"/>
    </location>
</feature>
<feature type="compositionally biased region" description="Polar residues" evidence="3">
    <location>
        <begin position="403"/>
        <end position="422"/>
    </location>
</feature>
<feature type="compositionally biased region" description="Acidic residues" evidence="3">
    <location>
        <begin position="676"/>
        <end position="689"/>
    </location>
</feature>
<feature type="compositionally biased region" description="Basic and acidic residues" evidence="3">
    <location>
        <begin position="698"/>
        <end position="708"/>
    </location>
</feature>
<feature type="compositionally biased region" description="Basic and acidic residues" evidence="3">
    <location>
        <begin position="747"/>
        <end position="772"/>
    </location>
</feature>
<feature type="compositionally biased region" description="Acidic residues" evidence="3">
    <location>
        <begin position="1010"/>
        <end position="1023"/>
    </location>
</feature>
<feature type="modified residue" description="Phosphoserine" evidence="1">
    <location>
        <position position="589"/>
    </location>
</feature>
<feature type="cross-link" description="Glycyl lysine isopeptide (Lys-Gly) (interchain with G-Cter in SUMO2)" evidence="1">
    <location>
        <position position="305"/>
    </location>
</feature>
<feature type="cross-link" description="Glycyl lysine isopeptide (Lys-Gly) (interchain with G-Cter in SUMO2)" evidence="1">
    <location>
        <position position="424"/>
    </location>
</feature>
<feature type="cross-link" description="Glycyl lysine isopeptide (Lys-Gly) (interchain with G-Cter in SUMO2)" evidence="1">
    <location>
        <position position="444"/>
    </location>
</feature>
<feature type="cross-link" description="Glycyl lysine isopeptide (Lys-Gly) (interchain with G-Cter in SUMO2)" evidence="1">
    <location>
        <position position="449"/>
    </location>
</feature>
<feature type="cross-link" description="Glycyl lysine isopeptide (Lys-Gly) (interchain with G-Cter in SUMO2)" evidence="1">
    <location>
        <position position="669"/>
    </location>
</feature>
<feature type="cross-link" description="Glycyl lysine isopeptide (Lys-Gly) (interchain with G-Cter in SUMO2)" evidence="1">
    <location>
        <position position="922"/>
    </location>
</feature>
<feature type="cross-link" description="Glycyl lysine isopeptide (Lys-Gly) (interchain with G-Cter in SUMO2)" evidence="1">
    <location>
        <position position="947"/>
    </location>
</feature>
<feature type="splice variant" id="VSP_051875" description="In isoform 2." evidence="7">
    <location>
        <begin position="44"/>
        <end position="138"/>
    </location>
</feature>
<feature type="sequence conflict" description="In Ref. 1; BAC26901." evidence="8" ref="1">
    <original>V</original>
    <variation>I</variation>
    <location>
        <position position="257"/>
    </location>
</feature>
<feature type="sequence conflict" description="In Ref. 1; BAC26901." evidence="8" ref="1">
    <original>S</original>
    <variation>G</variation>
    <location>
        <position position="406"/>
    </location>
</feature>
<evidence type="ECO:0000250" key="1">
    <source>
        <dbReference type="UniProtKB" id="Q6ZN30"/>
    </source>
</evidence>
<evidence type="ECO:0000255" key="2">
    <source>
        <dbReference type="PROSITE-ProRule" id="PRU00042"/>
    </source>
</evidence>
<evidence type="ECO:0000256" key="3">
    <source>
        <dbReference type="SAM" id="MobiDB-lite"/>
    </source>
</evidence>
<evidence type="ECO:0000269" key="4">
    <source>
    </source>
</evidence>
<evidence type="ECO:0000269" key="5">
    <source>
    </source>
</evidence>
<evidence type="ECO:0000269" key="6">
    <source>
    </source>
</evidence>
<evidence type="ECO:0000303" key="7">
    <source>
    </source>
</evidence>
<evidence type="ECO:0000305" key="8"/>
<evidence type="ECO:0000312" key="9">
    <source>
        <dbReference type="EMBL" id="AAR99388.1"/>
    </source>
</evidence>
<evidence type="ECO:0000312" key="10">
    <source>
        <dbReference type="EMBL" id="BAC26901.1"/>
    </source>
</evidence>
<evidence type="ECO:0000312" key="11">
    <source>
        <dbReference type="MGI" id="MGI:2443805"/>
    </source>
</evidence>
<proteinExistence type="evidence at protein level"/>
<protein>
    <recommendedName>
        <fullName>Zinc finger protein basonuclin-2</fullName>
    </recommendedName>
</protein>
<organism>
    <name type="scientific">Mus musculus</name>
    <name type="common">Mouse</name>
    <dbReference type="NCBI Taxonomy" id="10090"/>
    <lineage>
        <taxon>Eukaryota</taxon>
        <taxon>Metazoa</taxon>
        <taxon>Chordata</taxon>
        <taxon>Craniata</taxon>
        <taxon>Vertebrata</taxon>
        <taxon>Euteleostomi</taxon>
        <taxon>Mammalia</taxon>
        <taxon>Eutheria</taxon>
        <taxon>Euarchontoglires</taxon>
        <taxon>Glires</taxon>
        <taxon>Rodentia</taxon>
        <taxon>Myomorpha</taxon>
        <taxon>Muroidea</taxon>
        <taxon>Muridae</taxon>
        <taxon>Murinae</taxon>
        <taxon>Mus</taxon>
        <taxon>Mus</taxon>
    </lineage>
</organism>
<dbReference type="EMBL" id="AL772261">
    <property type="status" value="NOT_ANNOTATED_CDS"/>
    <property type="molecule type" value="Genomic_DNA"/>
</dbReference>
<dbReference type="EMBL" id="AL805919">
    <property type="status" value="NOT_ANNOTATED_CDS"/>
    <property type="molecule type" value="Genomic_DNA"/>
</dbReference>
<dbReference type="EMBL" id="BX004826">
    <property type="status" value="NOT_ANNOTATED_CDS"/>
    <property type="molecule type" value="Genomic_DNA"/>
</dbReference>
<dbReference type="EMBL" id="AK030323">
    <property type="protein sequence ID" value="BAC26901.1"/>
    <property type="molecule type" value="mRNA"/>
</dbReference>
<dbReference type="EMBL" id="AY438375">
    <property type="protein sequence ID" value="AAR99388.1"/>
    <property type="status" value="ALT_INIT"/>
    <property type="molecule type" value="mRNA"/>
</dbReference>
<dbReference type="CCDS" id="CCDS18301.2">
    <molecule id="Q8BMQ3-2"/>
</dbReference>
<dbReference type="RefSeq" id="NP_766458.3">
    <molecule id="Q8BMQ3-2"/>
    <property type="nucleotide sequence ID" value="NM_172870.4"/>
</dbReference>
<dbReference type="BioGRID" id="232414">
    <property type="interactions" value="1"/>
</dbReference>
<dbReference type="FunCoup" id="Q8BMQ3">
    <property type="interactions" value="1590"/>
</dbReference>
<dbReference type="IntAct" id="Q8BMQ3">
    <property type="interactions" value="1"/>
</dbReference>
<dbReference type="MINT" id="Q8BMQ3"/>
<dbReference type="STRING" id="10090.ENSMUSP00000135375"/>
<dbReference type="GlyGen" id="Q8BMQ3">
    <property type="glycosylation" value="1 site, 1 O-linked glycan (1 site)"/>
</dbReference>
<dbReference type="iPTMnet" id="Q8BMQ3"/>
<dbReference type="PhosphoSitePlus" id="Q8BMQ3"/>
<dbReference type="jPOST" id="Q8BMQ3"/>
<dbReference type="PaxDb" id="10090-ENSMUSP00000135375"/>
<dbReference type="PeptideAtlas" id="Q8BMQ3"/>
<dbReference type="ProteomicsDB" id="273749">
    <molecule id="Q8BMQ3-1"/>
</dbReference>
<dbReference type="ProteomicsDB" id="273750">
    <molecule id="Q8BMQ3-2"/>
</dbReference>
<dbReference type="Pumba" id="Q8BMQ3"/>
<dbReference type="Antibodypedia" id="10169">
    <property type="antibodies" value="78 antibodies from 17 providers"/>
</dbReference>
<dbReference type="DNASU" id="242509"/>
<dbReference type="Ensembl" id="ENSMUST00000102820.9">
    <molecule id="Q8BMQ3-1"/>
    <property type="protein sequence ID" value="ENSMUSP00000099884.3"/>
    <property type="gene ID" value="ENSMUSG00000028487.19"/>
</dbReference>
<dbReference type="Ensembl" id="ENSMUST00000176691.8">
    <molecule id="Q8BMQ3-2"/>
    <property type="protein sequence ID" value="ENSMUSP00000135375.2"/>
    <property type="gene ID" value="ENSMUSG00000028487.19"/>
</dbReference>
<dbReference type="GeneID" id="242509"/>
<dbReference type="KEGG" id="mmu:242509"/>
<dbReference type="UCSC" id="uc008tlg.2">
    <molecule id="Q8BMQ3-1"/>
    <property type="organism name" value="mouse"/>
</dbReference>
<dbReference type="UCSC" id="uc008tli.2">
    <molecule id="Q8BMQ3-2"/>
    <property type="organism name" value="mouse"/>
</dbReference>
<dbReference type="AGR" id="MGI:2443805"/>
<dbReference type="CTD" id="54796"/>
<dbReference type="MGI" id="MGI:2443805">
    <property type="gene designation" value="Bnc2"/>
</dbReference>
<dbReference type="VEuPathDB" id="HostDB:ENSMUSG00000028487"/>
<dbReference type="eggNOG" id="ENOG502QR8N">
    <property type="taxonomic scope" value="Eukaryota"/>
</dbReference>
<dbReference type="GeneTree" id="ENSGT00390000005844"/>
<dbReference type="HOGENOM" id="CLU_010637_0_0_1"/>
<dbReference type="InParanoid" id="Q8BMQ3"/>
<dbReference type="OMA" id="HQEITMD"/>
<dbReference type="OrthoDB" id="10070972at2759"/>
<dbReference type="PhylomeDB" id="Q8BMQ3"/>
<dbReference type="TreeFam" id="TF350399"/>
<dbReference type="BioGRID-ORCS" id="242509">
    <property type="hits" value="0 hits in 78 CRISPR screens"/>
</dbReference>
<dbReference type="CD-CODE" id="01CA17F3">
    <property type="entry name" value="Centrosome"/>
</dbReference>
<dbReference type="ChiTaRS" id="Bnc2">
    <property type="organism name" value="mouse"/>
</dbReference>
<dbReference type="PRO" id="PR:Q8BMQ3"/>
<dbReference type="Proteomes" id="UP000000589">
    <property type="component" value="Chromosome 4"/>
</dbReference>
<dbReference type="RNAct" id="Q8BMQ3">
    <property type="molecule type" value="protein"/>
</dbReference>
<dbReference type="Bgee" id="ENSMUSG00000028487">
    <property type="expression patterns" value="Expressed in animal zygote and 180 other cell types or tissues"/>
</dbReference>
<dbReference type="ExpressionAtlas" id="Q8BMQ3">
    <property type="expression patterns" value="baseline and differential"/>
</dbReference>
<dbReference type="GO" id="GO:0000785">
    <property type="term" value="C:chromatin"/>
    <property type="evidence" value="ECO:0000314"/>
    <property type="project" value="ARUK-UCL"/>
</dbReference>
<dbReference type="GO" id="GO:0001650">
    <property type="term" value="C:fibrillar center"/>
    <property type="evidence" value="ECO:0007669"/>
    <property type="project" value="Ensembl"/>
</dbReference>
<dbReference type="GO" id="GO:0016604">
    <property type="term" value="C:nuclear body"/>
    <property type="evidence" value="ECO:0007669"/>
    <property type="project" value="Ensembl"/>
</dbReference>
<dbReference type="GO" id="GO:0005634">
    <property type="term" value="C:nucleus"/>
    <property type="evidence" value="ECO:0000314"/>
    <property type="project" value="MGI"/>
</dbReference>
<dbReference type="GO" id="GO:0003677">
    <property type="term" value="F:DNA binding"/>
    <property type="evidence" value="ECO:0000314"/>
    <property type="project" value="MGI"/>
</dbReference>
<dbReference type="GO" id="GO:0000182">
    <property type="term" value="F:rDNA binding"/>
    <property type="evidence" value="ECO:0000314"/>
    <property type="project" value="ARUK-UCL"/>
</dbReference>
<dbReference type="GO" id="GO:0008270">
    <property type="term" value="F:zinc ion binding"/>
    <property type="evidence" value="ECO:0007669"/>
    <property type="project" value="UniProtKB-KW"/>
</dbReference>
<dbReference type="GO" id="GO:0003416">
    <property type="term" value="P:endochondral bone growth"/>
    <property type="evidence" value="ECO:0000315"/>
    <property type="project" value="MGI"/>
</dbReference>
<dbReference type="GO" id="GO:0060485">
    <property type="term" value="P:mesenchyme development"/>
    <property type="evidence" value="ECO:0000315"/>
    <property type="project" value="MGI"/>
</dbReference>
<dbReference type="GO" id="GO:0060021">
    <property type="term" value="P:roof of mouth development"/>
    <property type="evidence" value="ECO:0000315"/>
    <property type="project" value="MGI"/>
</dbReference>
<dbReference type="GO" id="GO:0043586">
    <property type="term" value="P:tongue development"/>
    <property type="evidence" value="ECO:0000315"/>
    <property type="project" value="MGI"/>
</dbReference>
<dbReference type="Gene3D" id="3.30.160.60">
    <property type="entry name" value="Classic Zinc Finger"/>
    <property type="match status" value="3"/>
</dbReference>
<dbReference type="InterPro" id="IPR040436">
    <property type="entry name" value="Disconnected-like"/>
</dbReference>
<dbReference type="InterPro" id="IPR013087">
    <property type="entry name" value="Znf_C2H2_type"/>
</dbReference>
<dbReference type="PANTHER" id="PTHR15021">
    <property type="entry name" value="DISCONNECTED-RELATED"/>
    <property type="match status" value="1"/>
</dbReference>
<dbReference type="PANTHER" id="PTHR15021:SF2">
    <property type="entry name" value="ZINC FINGER PROTEIN BASONUCLIN-2"/>
    <property type="match status" value="1"/>
</dbReference>
<dbReference type="Pfam" id="PF00096">
    <property type="entry name" value="zf-C2H2"/>
    <property type="match status" value="1"/>
</dbReference>
<dbReference type="Pfam" id="PF12874">
    <property type="entry name" value="zf-met"/>
    <property type="match status" value="1"/>
</dbReference>
<dbReference type="SMART" id="SM00355">
    <property type="entry name" value="ZnF_C2H2"/>
    <property type="match status" value="6"/>
</dbReference>
<dbReference type="PROSITE" id="PS00028">
    <property type="entry name" value="ZINC_FINGER_C2H2_1"/>
    <property type="match status" value="3"/>
</dbReference>
<dbReference type="PROSITE" id="PS50157">
    <property type="entry name" value="ZINC_FINGER_C2H2_2"/>
    <property type="match status" value="3"/>
</dbReference>
<sequence>MARFVPSPPPNCLSYKSEGRLGEQDWQAHFKVPCCGVDPSQLESEEAEVDVRERDTQRDREPKRARDLTLRDSCTDNSMQFGTRTTAAEPGFMGTWQNADTNLLFRMSQQVPLACAGRVLGADFCPNLEEPDQRLEVQAIRCTLVNCTCECFQPGKINLRTCDQCKHGWVAHALDKLSTQHLYHPTQVEIVQSNVVFDISSLMLYGTQAVPVRLKILLDRLFSVLKQEEVLHILHGLGWTLRDYVRGYILQDAAGKVLDRWAIMSREEEIITLQQFLRFGETKSIVELMAIQEKEGQAVAVPSSKTDSDIRTFIESNNRTRSPSLLAHLENSNPSSIHHFENIPNSLAFLLPFQYINPVSAPLLGLPPNGLLLEQPGLRLREPSISTQNEYNESSESEVSPTPYKSDQTPNRNALTSITNVEPKTEPACVSPIQNSAPVSDLSKTEHPKSSFRIHRMRRMGSASRKGRVFCNACGKTFYDKGTLKIHYNAVHLKIKHRCTIEGCNMVFSSLRSRNRHSANPNPRLHMPMLRNNRDKDLIRATSGAATPVIASTKSNLTLTSPGRPPMGFTTPPLDPVLQNPLPSQLVFSGLKTVQPVPPFYRSLLTPGEMVSPPTSLPTSPIIPTSGTIEQHPPPPSEPIVPAVMMGTHEPSADLAPKKKPRKSSMPVKIEKEIIDTADEFDDEDDDPNDGGTVVNDMSHDNHCHSQDEMSPGMSVKDFSKHNRTRCISRTEIRRADSMTSEDQEPERDYENESESSEPKLGEESMEGDEHLHSEVSEKVLMNSERPDENHSEPSHQDVIKVKEEFTDPTYDMFYMSQYGLYNGGGASMAALHESFTSSLNYGSPQKFSPEGDLCSSPDPKICYVCKKSFKSSYSVKLHYRNVHLKEMHVCTVAGCNAAFPSRRSRDRHSANINLHRKLLTKELDDMSLDSSQPSLSKDLRDEFLMKIYGAQHPLGLDGREDASSPAGTEDSHLNGYGRGMAEDYMVLDLSTTSSLQSSSSVHSSRESDAGSDEGILLDDIDGASDSGESTHKAEAPTLPGSLGAEVSGSLMFSSLSGSNGGIMCNICHKMYSNKGTLRVHYKTVHLREMHKCKVPGCNMMFSSVRSRNRHSQNPNLHKNIPFTSID</sequence>
<name>BNC2_MOUSE</name>
<comment type="function">
    <text evidence="1">Probable transcription factor specific for skin keratinocytes. May play a role in the differentiation of spermatozoa and oocytes. May also play an important role in early urinary-tract development.</text>
</comment>
<comment type="subcellular location">
    <subcellularLocation>
        <location evidence="5">Nucleus</location>
    </subcellularLocation>
</comment>
<comment type="alternative products">
    <event type="alternative splicing"/>
    <isoform>
        <id>Q8BMQ3-1</id>
        <name evidence="5">1</name>
        <sequence type="displayed"/>
    </isoform>
    <isoform>
        <id>Q8BMQ3-2</id>
        <name evidence="8">2</name>
        <sequence type="described" ref="VSP_051875"/>
    </isoform>
</comment>
<comment type="tissue specificity">
    <text evidence="4 5">Highly expressed in ovary, testis and kidney. Expressed at moderate levels in skin and small intestine, and at lower levels in lung. Trace amounts of expression detected in liver and colon. Not detected in brain, spleen or thymus.</text>
</comment>
<comment type="developmental stage">
    <text evidence="5 6">Detected at embryonic days 15.5 and 17.5. Expressed in the developing lower urinary-tract structures, with emphasis on the genital tubercle above the phallic urethra and below the pelvic urethra at as early as embryonic day 13.5 dpc, the critical time point for urethral development. In embryos, expression is also visible in the brain, in the mandibular region, and in dorsal parts above the spinal cord.</text>
</comment>
<comment type="sequence caution" evidence="8">
    <conflict type="erroneous initiation">
        <sequence resource="EMBL-CDS" id="AAR99388"/>
    </conflict>
    <text>Truncated N-terminus.</text>
</comment>
<accession>Q8BMQ3</accession>
<accession>H3BIU0</accession>
<accession>Q6T3A4</accession>
<reference evidence="8 10" key="1">
    <citation type="journal article" date="2005" name="Science">
        <title>The transcriptional landscape of the mammalian genome.</title>
        <authorList>
            <person name="Carninci P."/>
            <person name="Kasukawa T."/>
            <person name="Katayama S."/>
            <person name="Gough J."/>
            <person name="Frith M.C."/>
            <person name="Maeda N."/>
            <person name="Oyama R."/>
            <person name="Ravasi T."/>
            <person name="Lenhard B."/>
            <person name="Wells C."/>
            <person name="Kodzius R."/>
            <person name="Shimokawa K."/>
            <person name="Bajic V.B."/>
            <person name="Brenner S.E."/>
            <person name="Batalov S."/>
            <person name="Forrest A.R."/>
            <person name="Zavolan M."/>
            <person name="Davis M.J."/>
            <person name="Wilming L.G."/>
            <person name="Aidinis V."/>
            <person name="Allen J.E."/>
            <person name="Ambesi-Impiombato A."/>
            <person name="Apweiler R."/>
            <person name="Aturaliya R.N."/>
            <person name="Bailey T.L."/>
            <person name="Bansal M."/>
            <person name="Baxter L."/>
            <person name="Beisel K.W."/>
            <person name="Bersano T."/>
            <person name="Bono H."/>
            <person name="Chalk A.M."/>
            <person name="Chiu K.P."/>
            <person name="Choudhary V."/>
            <person name="Christoffels A."/>
            <person name="Clutterbuck D.R."/>
            <person name="Crowe M.L."/>
            <person name="Dalla E."/>
            <person name="Dalrymple B.P."/>
            <person name="de Bono B."/>
            <person name="Della Gatta G."/>
            <person name="di Bernardo D."/>
            <person name="Down T."/>
            <person name="Engstrom P."/>
            <person name="Fagiolini M."/>
            <person name="Faulkner G."/>
            <person name="Fletcher C.F."/>
            <person name="Fukushima T."/>
            <person name="Furuno M."/>
            <person name="Futaki S."/>
            <person name="Gariboldi M."/>
            <person name="Georgii-Hemming P."/>
            <person name="Gingeras T.R."/>
            <person name="Gojobori T."/>
            <person name="Green R.E."/>
            <person name="Gustincich S."/>
            <person name="Harbers M."/>
            <person name="Hayashi Y."/>
            <person name="Hensch T.K."/>
            <person name="Hirokawa N."/>
            <person name="Hill D."/>
            <person name="Huminiecki L."/>
            <person name="Iacono M."/>
            <person name="Ikeo K."/>
            <person name="Iwama A."/>
            <person name="Ishikawa T."/>
            <person name="Jakt M."/>
            <person name="Kanapin A."/>
            <person name="Katoh M."/>
            <person name="Kawasawa Y."/>
            <person name="Kelso J."/>
            <person name="Kitamura H."/>
            <person name="Kitano H."/>
            <person name="Kollias G."/>
            <person name="Krishnan S.P."/>
            <person name="Kruger A."/>
            <person name="Kummerfeld S.K."/>
            <person name="Kurochkin I.V."/>
            <person name="Lareau L.F."/>
            <person name="Lazarevic D."/>
            <person name="Lipovich L."/>
            <person name="Liu J."/>
            <person name="Liuni S."/>
            <person name="McWilliam S."/>
            <person name="Madan Babu M."/>
            <person name="Madera M."/>
            <person name="Marchionni L."/>
            <person name="Matsuda H."/>
            <person name="Matsuzawa S."/>
            <person name="Miki H."/>
            <person name="Mignone F."/>
            <person name="Miyake S."/>
            <person name="Morris K."/>
            <person name="Mottagui-Tabar S."/>
            <person name="Mulder N."/>
            <person name="Nakano N."/>
            <person name="Nakauchi H."/>
            <person name="Ng P."/>
            <person name="Nilsson R."/>
            <person name="Nishiguchi S."/>
            <person name="Nishikawa S."/>
            <person name="Nori F."/>
            <person name="Ohara O."/>
            <person name="Okazaki Y."/>
            <person name="Orlando V."/>
            <person name="Pang K.C."/>
            <person name="Pavan W.J."/>
            <person name="Pavesi G."/>
            <person name="Pesole G."/>
            <person name="Petrovsky N."/>
            <person name="Piazza S."/>
            <person name="Reed J."/>
            <person name="Reid J.F."/>
            <person name="Ring B.Z."/>
            <person name="Ringwald M."/>
            <person name="Rost B."/>
            <person name="Ruan Y."/>
            <person name="Salzberg S.L."/>
            <person name="Sandelin A."/>
            <person name="Schneider C."/>
            <person name="Schoenbach C."/>
            <person name="Sekiguchi K."/>
            <person name="Semple C.A."/>
            <person name="Seno S."/>
            <person name="Sessa L."/>
            <person name="Sheng Y."/>
            <person name="Shibata Y."/>
            <person name="Shimada H."/>
            <person name="Shimada K."/>
            <person name="Silva D."/>
            <person name="Sinclair B."/>
            <person name="Sperling S."/>
            <person name="Stupka E."/>
            <person name="Sugiura K."/>
            <person name="Sultana R."/>
            <person name="Takenaka Y."/>
            <person name="Taki K."/>
            <person name="Tammoja K."/>
            <person name="Tan S.L."/>
            <person name="Tang S."/>
            <person name="Taylor M.S."/>
            <person name="Tegner J."/>
            <person name="Teichmann S.A."/>
            <person name="Ueda H.R."/>
            <person name="van Nimwegen E."/>
            <person name="Verardo R."/>
            <person name="Wei C.L."/>
            <person name="Yagi K."/>
            <person name="Yamanishi H."/>
            <person name="Zabarovsky E."/>
            <person name="Zhu S."/>
            <person name="Zimmer A."/>
            <person name="Hide W."/>
            <person name="Bult C."/>
            <person name="Grimmond S.M."/>
            <person name="Teasdale R.D."/>
            <person name="Liu E.T."/>
            <person name="Brusic V."/>
            <person name="Quackenbush J."/>
            <person name="Wahlestedt C."/>
            <person name="Mattick J.S."/>
            <person name="Hume D.A."/>
            <person name="Kai C."/>
            <person name="Sasaki D."/>
            <person name="Tomaru Y."/>
            <person name="Fukuda S."/>
            <person name="Kanamori-Katayama M."/>
            <person name="Suzuki M."/>
            <person name="Aoki J."/>
            <person name="Arakawa T."/>
            <person name="Iida J."/>
            <person name="Imamura K."/>
            <person name="Itoh M."/>
            <person name="Kato T."/>
            <person name="Kawaji H."/>
            <person name="Kawagashira N."/>
            <person name="Kawashima T."/>
            <person name="Kojima M."/>
            <person name="Kondo S."/>
            <person name="Konno H."/>
            <person name="Nakano K."/>
            <person name="Ninomiya N."/>
            <person name="Nishio T."/>
            <person name="Okada M."/>
            <person name="Plessy C."/>
            <person name="Shibata K."/>
            <person name="Shiraki T."/>
            <person name="Suzuki S."/>
            <person name="Tagami M."/>
            <person name="Waki K."/>
            <person name="Watahiki A."/>
            <person name="Okamura-Oho Y."/>
            <person name="Suzuki H."/>
            <person name="Kawai J."/>
            <person name="Hayashizaki Y."/>
        </authorList>
    </citation>
    <scope>NUCLEOTIDE SEQUENCE [LARGE SCALE MRNA] (ISOFORM 2)</scope>
    <source>
        <strain evidence="10">C57BL/6J</strain>
        <tissue evidence="10">Ovary</tissue>
        <tissue evidence="10">Uterus</tissue>
    </source>
</reference>
<reference key="2">
    <citation type="journal article" date="2009" name="PLoS Biol.">
        <title>Lineage-specific biology revealed by a finished genome assembly of the mouse.</title>
        <authorList>
            <person name="Church D.M."/>
            <person name="Goodstadt L."/>
            <person name="Hillier L.W."/>
            <person name="Zody M.C."/>
            <person name="Goldstein S."/>
            <person name="She X."/>
            <person name="Bult C.J."/>
            <person name="Agarwala R."/>
            <person name="Cherry J.L."/>
            <person name="DiCuccio M."/>
            <person name="Hlavina W."/>
            <person name="Kapustin Y."/>
            <person name="Meric P."/>
            <person name="Maglott D."/>
            <person name="Birtle Z."/>
            <person name="Marques A.C."/>
            <person name="Graves T."/>
            <person name="Zhou S."/>
            <person name="Teague B."/>
            <person name="Potamousis K."/>
            <person name="Churas C."/>
            <person name="Place M."/>
            <person name="Herschleb J."/>
            <person name="Runnheim R."/>
            <person name="Forrest D."/>
            <person name="Amos-Landgraf J."/>
            <person name="Schwartz D.C."/>
            <person name="Cheng Z."/>
            <person name="Lindblad-Toh K."/>
            <person name="Eichler E.E."/>
            <person name="Ponting C.P."/>
        </authorList>
    </citation>
    <scope>NUCLEOTIDE SEQUENCE [LARGE SCALE GENOMIC DNA]</scope>
    <source>
        <strain>C57BL/6J</strain>
    </source>
</reference>
<reference evidence="8 9" key="3">
    <citation type="journal article" date="2004" name="Genomics">
        <title>Identification of Basonuclin2, a DNA-binding zinc-finger protein expressed in germ tissues and skin keratinocytes.</title>
        <authorList>
            <person name="Romano R.-A."/>
            <person name="Li H."/>
            <person name="Tummala R."/>
            <person name="Maul R."/>
            <person name="Sinha S."/>
        </authorList>
    </citation>
    <scope>NUCLEOTIDE SEQUENCE [MRNA] OF 68-1127 (ISOFORM 1)</scope>
    <scope>SUBCELLULAR LOCATION</scope>
    <scope>TISSUE SPECIFICITY</scope>
    <scope>DEVELOPMENTAL STAGE</scope>
    <source>
        <strain evidence="9">CD-1</strain>
    </source>
</reference>
<reference evidence="8" key="4">
    <citation type="journal article" date="2004" name="Proc. Natl. Acad. Sci. U.S.A.">
        <title>Basonuclin 2: an extremely conserved homolog of the zinc finger protein basonuclin.</title>
        <authorList>
            <person name="Vanhoutteghem A."/>
            <person name="Djian P."/>
        </authorList>
    </citation>
    <scope>PROBABLE FUNCTION</scope>
    <scope>TISSUE SPECIFICITY</scope>
</reference>
<reference key="5">
    <citation type="journal article" date="2010" name="Cell">
        <title>A tissue-specific atlas of mouse protein phosphorylation and expression.</title>
        <authorList>
            <person name="Huttlin E.L."/>
            <person name="Jedrychowski M.P."/>
            <person name="Elias J.E."/>
            <person name="Goswami T."/>
            <person name="Rad R."/>
            <person name="Beausoleil S.A."/>
            <person name="Villen J."/>
            <person name="Haas W."/>
            <person name="Sowa M.E."/>
            <person name="Gygi S.P."/>
        </authorList>
    </citation>
    <scope>IDENTIFICATION BY MASS SPECTROMETRY [LARGE SCALE ANALYSIS]</scope>
    <source>
        <tissue>Kidney</tissue>
    </source>
</reference>
<reference key="6">
    <citation type="journal article" date="2019" name="Am. J. Hum. Genet.">
        <title>Rare variants in BNC2 are implicated in autosomal-dominant congenital lower urinary-tract obstruction.</title>
        <authorList>
            <person name="Kolvenbach C.M."/>
            <person name="Dworschak G.C."/>
            <person name="Frese S."/>
            <person name="Japp A.S."/>
            <person name="Schuster P."/>
            <person name="Wenzlitschke N."/>
            <person name="Yilmaz O."/>
            <person name="Lopes F.M."/>
            <person name="Pryalukhin A."/>
            <person name="Schierbaum L."/>
            <person name="van der Zanden L.F.M."/>
            <person name="Kause F."/>
            <person name="Schneider R."/>
            <person name="Taranta-Janusz K."/>
            <person name="Szczepanska M."/>
            <person name="Pawlaczyk K."/>
            <person name="Newman W.G."/>
            <person name="Beaman G.M."/>
            <person name="Stuart H.M."/>
            <person name="Cervellione R.M."/>
            <person name="Feitz W.F.J."/>
            <person name="van Rooij I.A.L.M."/>
            <person name="Schreuder M.F."/>
            <person name="Steffens M."/>
            <person name="Weber S."/>
            <person name="Merz W.M."/>
            <person name="Feldkoetter M."/>
            <person name="Hoppe B."/>
            <person name="Thiele H."/>
            <person name="Altmueller J."/>
            <person name="Berg C."/>
            <person name="Kristiansen G."/>
            <person name="Ludwig M."/>
            <person name="Reutter H."/>
            <person name="Woolf A.S."/>
            <person name="Hildebrandt F."/>
            <person name="Grote P."/>
            <person name="Zaniew M."/>
            <person name="Odermatt B."/>
            <person name="Hilger A.C."/>
        </authorList>
    </citation>
    <scope>DEVELOPMENTAL STAGE</scope>
</reference>
<gene>
    <name evidence="11" type="primary">Bnc2</name>
</gene>
<keyword id="KW-0025">Alternative splicing</keyword>
<keyword id="KW-1017">Isopeptide bond</keyword>
<keyword id="KW-0479">Metal-binding</keyword>
<keyword id="KW-0539">Nucleus</keyword>
<keyword id="KW-0597">Phosphoprotein</keyword>
<keyword id="KW-1185">Reference proteome</keyword>
<keyword id="KW-0677">Repeat</keyword>
<keyword id="KW-0804">Transcription</keyword>
<keyword id="KW-0805">Transcription regulation</keyword>
<keyword id="KW-0832">Ubl conjugation</keyword>
<keyword id="KW-0862">Zinc</keyword>
<keyword id="KW-0863">Zinc-finger</keyword>